<feature type="chain" id="PRO_1000079364" description="Polyphosphate kinase">
    <location>
        <begin position="1"/>
        <end position="742"/>
    </location>
</feature>
<feature type="region of interest" description="Disordered" evidence="2">
    <location>
        <begin position="718"/>
        <end position="742"/>
    </location>
</feature>
<feature type="compositionally biased region" description="Basic and acidic residues" evidence="2">
    <location>
        <begin position="726"/>
        <end position="742"/>
    </location>
</feature>
<feature type="active site" description="Phosphohistidine intermediate" evidence="1">
    <location>
        <position position="491"/>
    </location>
</feature>
<feature type="binding site" evidence="1">
    <location>
        <position position="91"/>
    </location>
    <ligand>
        <name>ATP</name>
        <dbReference type="ChEBI" id="CHEBI:30616"/>
    </ligand>
</feature>
<feature type="binding site" evidence="1">
    <location>
        <position position="431"/>
    </location>
    <ligand>
        <name>Mg(2+)</name>
        <dbReference type="ChEBI" id="CHEBI:18420"/>
    </ligand>
</feature>
<feature type="binding site" evidence="1">
    <location>
        <position position="461"/>
    </location>
    <ligand>
        <name>Mg(2+)</name>
        <dbReference type="ChEBI" id="CHEBI:18420"/>
    </ligand>
</feature>
<feature type="binding site" evidence="1">
    <location>
        <position position="524"/>
    </location>
    <ligand>
        <name>ATP</name>
        <dbReference type="ChEBI" id="CHEBI:30616"/>
    </ligand>
</feature>
<feature type="binding site" evidence="1">
    <location>
        <position position="624"/>
    </location>
    <ligand>
        <name>ATP</name>
        <dbReference type="ChEBI" id="CHEBI:30616"/>
    </ligand>
</feature>
<feature type="binding site" evidence="1">
    <location>
        <position position="652"/>
    </location>
    <ligand>
        <name>ATP</name>
        <dbReference type="ChEBI" id="CHEBI:30616"/>
    </ligand>
</feature>
<comment type="function">
    <text evidence="1">Catalyzes the reversible transfer of the terminal phosphate of ATP to form a long-chain polyphosphate (polyP).</text>
</comment>
<comment type="catalytic activity">
    <reaction evidence="1">
        <text>[phosphate](n) + ATP = [phosphate](n+1) + ADP</text>
        <dbReference type="Rhea" id="RHEA:19573"/>
        <dbReference type="Rhea" id="RHEA-COMP:9859"/>
        <dbReference type="Rhea" id="RHEA-COMP:14280"/>
        <dbReference type="ChEBI" id="CHEBI:16838"/>
        <dbReference type="ChEBI" id="CHEBI:30616"/>
        <dbReference type="ChEBI" id="CHEBI:456216"/>
        <dbReference type="EC" id="2.7.4.1"/>
    </reaction>
</comment>
<comment type="cofactor">
    <cofactor evidence="1">
        <name>Mg(2+)</name>
        <dbReference type="ChEBI" id="CHEBI:18420"/>
    </cofactor>
</comment>
<comment type="PTM">
    <text evidence="1">An intermediate of this reaction is the autophosphorylated ppk in which a phosphate is covalently linked to a histidine residue through a N-P bond.</text>
</comment>
<comment type="similarity">
    <text evidence="1">Belongs to the polyphosphate kinase 1 (PPK1) family.</text>
</comment>
<dbReference type="EC" id="2.7.4.1" evidence="1"/>
<dbReference type="EMBL" id="AM408590">
    <property type="protein sequence ID" value="CAL72994.1"/>
    <property type="molecule type" value="Genomic_DNA"/>
</dbReference>
<dbReference type="RefSeq" id="WP_003415097.1">
    <property type="nucleotide sequence ID" value="NC_008769.1"/>
</dbReference>
<dbReference type="SMR" id="A1KMX8"/>
<dbReference type="KEGG" id="mbb:BCG_3005"/>
<dbReference type="HOGENOM" id="CLU_009678_5_0_11"/>
<dbReference type="Proteomes" id="UP000001472">
    <property type="component" value="Chromosome"/>
</dbReference>
<dbReference type="GO" id="GO:0009358">
    <property type="term" value="C:polyphosphate kinase complex"/>
    <property type="evidence" value="ECO:0007669"/>
    <property type="project" value="InterPro"/>
</dbReference>
<dbReference type="GO" id="GO:0005524">
    <property type="term" value="F:ATP binding"/>
    <property type="evidence" value="ECO:0007669"/>
    <property type="project" value="UniProtKB-KW"/>
</dbReference>
<dbReference type="GO" id="GO:0046872">
    <property type="term" value="F:metal ion binding"/>
    <property type="evidence" value="ECO:0007669"/>
    <property type="project" value="UniProtKB-KW"/>
</dbReference>
<dbReference type="GO" id="GO:0008976">
    <property type="term" value="F:polyphosphate kinase activity"/>
    <property type="evidence" value="ECO:0007669"/>
    <property type="project" value="UniProtKB-UniRule"/>
</dbReference>
<dbReference type="GO" id="GO:0006799">
    <property type="term" value="P:polyphosphate biosynthetic process"/>
    <property type="evidence" value="ECO:0007669"/>
    <property type="project" value="UniProtKB-UniRule"/>
</dbReference>
<dbReference type="CDD" id="cd09165">
    <property type="entry name" value="PLDc_PaPPK1_C1_like"/>
    <property type="match status" value="1"/>
</dbReference>
<dbReference type="FunFam" id="1.20.58.310:FF:000002">
    <property type="entry name" value="Polyphosphate kinase"/>
    <property type="match status" value="1"/>
</dbReference>
<dbReference type="FunFam" id="3.30.1840.10:FF:000002">
    <property type="entry name" value="Polyphosphate kinase"/>
    <property type="match status" value="1"/>
</dbReference>
<dbReference type="FunFam" id="3.30.870.10:FF:000001">
    <property type="entry name" value="Polyphosphate kinase"/>
    <property type="match status" value="1"/>
</dbReference>
<dbReference type="Gene3D" id="3.30.870.10">
    <property type="entry name" value="Endonuclease Chain A"/>
    <property type="match status" value="2"/>
</dbReference>
<dbReference type="Gene3D" id="3.30.1840.10">
    <property type="entry name" value="Polyphosphate kinase middle domain"/>
    <property type="match status" value="1"/>
</dbReference>
<dbReference type="Gene3D" id="1.20.58.310">
    <property type="entry name" value="Polyphosphate kinase N-terminal domain"/>
    <property type="match status" value="1"/>
</dbReference>
<dbReference type="HAMAP" id="MF_00347">
    <property type="entry name" value="Polyphosphate_kinase"/>
    <property type="match status" value="1"/>
</dbReference>
<dbReference type="InterPro" id="IPR003414">
    <property type="entry name" value="PP_kinase"/>
</dbReference>
<dbReference type="InterPro" id="IPR041108">
    <property type="entry name" value="PP_kinase_C_1"/>
</dbReference>
<dbReference type="InterPro" id="IPR024953">
    <property type="entry name" value="PP_kinase_middle"/>
</dbReference>
<dbReference type="InterPro" id="IPR036830">
    <property type="entry name" value="PP_kinase_middle_dom_sf"/>
</dbReference>
<dbReference type="InterPro" id="IPR025200">
    <property type="entry name" value="PPK_C_dom2"/>
</dbReference>
<dbReference type="InterPro" id="IPR025198">
    <property type="entry name" value="PPK_N_dom"/>
</dbReference>
<dbReference type="InterPro" id="IPR036832">
    <property type="entry name" value="PPK_N_dom_sf"/>
</dbReference>
<dbReference type="NCBIfam" id="TIGR03705">
    <property type="entry name" value="poly_P_kin"/>
    <property type="match status" value="1"/>
</dbReference>
<dbReference type="NCBIfam" id="NF003917">
    <property type="entry name" value="PRK05443.1-1"/>
    <property type="match status" value="1"/>
</dbReference>
<dbReference type="NCBIfam" id="NF003918">
    <property type="entry name" value="PRK05443.1-2"/>
    <property type="match status" value="1"/>
</dbReference>
<dbReference type="NCBIfam" id="NF003921">
    <property type="entry name" value="PRK05443.2-2"/>
    <property type="match status" value="1"/>
</dbReference>
<dbReference type="NCBIfam" id="NF003922">
    <property type="entry name" value="PRK05443.2-3"/>
    <property type="match status" value="1"/>
</dbReference>
<dbReference type="PANTHER" id="PTHR30218">
    <property type="entry name" value="POLYPHOSPHATE KINASE"/>
    <property type="match status" value="1"/>
</dbReference>
<dbReference type="PANTHER" id="PTHR30218:SF0">
    <property type="entry name" value="POLYPHOSPHATE KINASE"/>
    <property type="match status" value="1"/>
</dbReference>
<dbReference type="Pfam" id="PF02503">
    <property type="entry name" value="PP_kinase"/>
    <property type="match status" value="1"/>
</dbReference>
<dbReference type="Pfam" id="PF13090">
    <property type="entry name" value="PP_kinase_C"/>
    <property type="match status" value="1"/>
</dbReference>
<dbReference type="Pfam" id="PF17941">
    <property type="entry name" value="PP_kinase_C_1"/>
    <property type="match status" value="1"/>
</dbReference>
<dbReference type="Pfam" id="PF13089">
    <property type="entry name" value="PP_kinase_N"/>
    <property type="match status" value="1"/>
</dbReference>
<dbReference type="PIRSF" id="PIRSF015589">
    <property type="entry name" value="PP_kinase"/>
    <property type="match status" value="1"/>
</dbReference>
<dbReference type="SUPFAM" id="SSF56024">
    <property type="entry name" value="Phospholipase D/nuclease"/>
    <property type="match status" value="2"/>
</dbReference>
<dbReference type="SUPFAM" id="SSF143724">
    <property type="entry name" value="PHP14-like"/>
    <property type="match status" value="1"/>
</dbReference>
<dbReference type="SUPFAM" id="SSF140356">
    <property type="entry name" value="PPK N-terminal domain-like"/>
    <property type="match status" value="1"/>
</dbReference>
<proteinExistence type="inferred from homology"/>
<accession>A1KMX8</accession>
<name>PPK1_MYCBP</name>
<organism>
    <name type="scientific">Mycobacterium bovis (strain BCG / Pasteur 1173P2)</name>
    <dbReference type="NCBI Taxonomy" id="410289"/>
    <lineage>
        <taxon>Bacteria</taxon>
        <taxon>Bacillati</taxon>
        <taxon>Actinomycetota</taxon>
        <taxon>Actinomycetes</taxon>
        <taxon>Mycobacteriales</taxon>
        <taxon>Mycobacteriaceae</taxon>
        <taxon>Mycobacterium</taxon>
        <taxon>Mycobacterium tuberculosis complex</taxon>
    </lineage>
</organism>
<gene>
    <name evidence="1" type="primary">ppk</name>
    <name type="ordered locus">BCG_3005</name>
</gene>
<sequence>MMSNDRKVTEIENSPVTEVRPEEHAWYPDDSALAAPPAATPAAISDQLPSDRYLNRELSWLDFNARVLALAADKSMPLLERAKFLAIFASNLDEFYMVRVAGLKRRDEMGLSVRSADGLTPREQLGRIGEQTQQLASRHARVFLDSVLPALGEEGIYIVTWADLDQAERDRLSTYFNEQVFPVLTPLAVDPAHPFPFVSGLSLNLAVTVRQPEDGTQHFARVKVPDNVDRFVELAAREASEEAAGTEGRTALRFLPMEELIAAFLPVLFPGMEIVEHHAFRITRNADFEVEEDRDEDLLQALERELARRRFGSPVRLEIADDMTESMLELLLRELDVHPGDVIEVPGLLDLSSLWQIYAVDRPTLKDRTFVPATHPAFAERETPKSIFATLREGDVLVHHPYDSFSTSVQRFIEQAAADPNVLAIKQTLYRTSGDSPIVRALIDAAEAGKQVVALVEIKARFDEQANIAWARALEQAGVHVAYGLVGLKTHCKTALVVRREGPTIRRYCHVGTGNYNSKTARLYEDVGLLTAAPDIGADLTDLFNSLTGYSRKLSYRNLLVAPHGIRAGIIDRVEREVAAHRAEGAHNGKGRIRLKMNALVDEQVIDALYRASRAGVRIEVVVRGICALRPGAQGISENIIVRSILGRFLEHSRILHFRAIDEFWIGSADMMHRNLDRRVEVMAQVKNPRLTAQLDELFESALDPCTRCWELGPDGQWTASPQEGHSVRDHQESLMERHRSP</sequence>
<keyword id="KW-0067">ATP-binding</keyword>
<keyword id="KW-0418">Kinase</keyword>
<keyword id="KW-0460">Magnesium</keyword>
<keyword id="KW-0479">Metal-binding</keyword>
<keyword id="KW-0547">Nucleotide-binding</keyword>
<keyword id="KW-0597">Phosphoprotein</keyword>
<keyword id="KW-0808">Transferase</keyword>
<reference key="1">
    <citation type="journal article" date="2007" name="Proc. Natl. Acad. Sci. U.S.A.">
        <title>Genome plasticity of BCG and impact on vaccine efficacy.</title>
        <authorList>
            <person name="Brosch R."/>
            <person name="Gordon S.V."/>
            <person name="Garnier T."/>
            <person name="Eiglmeier K."/>
            <person name="Frigui W."/>
            <person name="Valenti P."/>
            <person name="Dos Santos S."/>
            <person name="Duthoy S."/>
            <person name="Lacroix C."/>
            <person name="Garcia-Pelayo C."/>
            <person name="Inwald J.K."/>
            <person name="Golby P."/>
            <person name="Garcia J.N."/>
            <person name="Hewinson R.G."/>
            <person name="Behr M.A."/>
            <person name="Quail M.A."/>
            <person name="Churcher C."/>
            <person name="Barrell B.G."/>
            <person name="Parkhill J."/>
            <person name="Cole S.T."/>
        </authorList>
    </citation>
    <scope>NUCLEOTIDE SEQUENCE [LARGE SCALE GENOMIC DNA]</scope>
    <source>
        <strain>BCG / Pasteur 1173P2</strain>
    </source>
</reference>
<evidence type="ECO:0000255" key="1">
    <source>
        <dbReference type="HAMAP-Rule" id="MF_00347"/>
    </source>
</evidence>
<evidence type="ECO:0000256" key="2">
    <source>
        <dbReference type="SAM" id="MobiDB-lite"/>
    </source>
</evidence>
<protein>
    <recommendedName>
        <fullName evidence="1">Polyphosphate kinase</fullName>
        <ecNumber evidence="1">2.7.4.1</ecNumber>
    </recommendedName>
    <alternativeName>
        <fullName evidence="1">ATP-polyphosphate phosphotransferase</fullName>
    </alternativeName>
    <alternativeName>
        <fullName evidence="1">Polyphosphoric acid kinase</fullName>
    </alternativeName>
</protein>